<keyword id="KW-0067">ATP-binding</keyword>
<keyword id="KW-0963">Cytoplasm</keyword>
<keyword id="KW-0413">Isomerase</keyword>
<keyword id="KW-0460">Magnesium</keyword>
<keyword id="KW-0479">Metal-binding</keyword>
<keyword id="KW-0547">Nucleotide-binding</keyword>
<keyword id="KW-0539">Nucleus</keyword>
<keyword id="KW-1185">Reference proteome</keyword>
<keyword id="KW-0697">Rotamase</keyword>
<organism evidence="10">
    <name type="scientific">Drosophila melanogaster</name>
    <name type="common">Fruit fly</name>
    <dbReference type="NCBI Taxonomy" id="7227"/>
    <lineage>
        <taxon>Eukaryota</taxon>
        <taxon>Metazoa</taxon>
        <taxon>Ecdysozoa</taxon>
        <taxon>Arthropoda</taxon>
        <taxon>Hexapoda</taxon>
        <taxon>Insecta</taxon>
        <taxon>Pterygota</taxon>
        <taxon>Neoptera</taxon>
        <taxon>Endopterygota</taxon>
        <taxon>Diptera</taxon>
        <taxon>Brachycera</taxon>
        <taxon>Muscomorpha</taxon>
        <taxon>Ephydroidea</taxon>
        <taxon>Drosophilidae</taxon>
        <taxon>Drosophila</taxon>
        <taxon>Sophophora</taxon>
    </lineage>
</organism>
<sequence length="398" mass="44256">MASGINQAAGKLPAIAKKVQNLGDMGVWQKSRAFHDLIGYINGTSSAIQGIKTTDEIFESEMLKKLLRLFDALEKLVEQNPPLEQPQRFGNKAYRDWAQAMRELLPELLEQLLPDDKKRYQVELGQYLTESFGNATRIDYGTGHELSFLFFLCSLFKAEILQERDIVSAALRLFNRYLELARQLQRTYNMEPAGSQGVWSLDDFQFVPFIWGSAQLAVKSPFDPSKFVDEAIITEYKDHFMFISCIDYICKVKTGHFGEHSNQLWSITDVPTWAKINAGLVKMYQKEILSKFPVIQHVYFGELMTFEPVSSGTTLSNARLGHVAPPPSKRICIGTPNLVPPVPVATAPPPPAESLSIEQNVGDSSSESSDNSVVLRPSTSSSSLVAAAEGSGDKPSKE</sequence>
<reference evidence="10" key="1">
    <citation type="journal article" date="2000" name="Science">
        <title>The genome sequence of Drosophila melanogaster.</title>
        <authorList>
            <person name="Adams M.D."/>
            <person name="Celniker S.E."/>
            <person name="Holt R.A."/>
            <person name="Evans C.A."/>
            <person name="Gocayne J.D."/>
            <person name="Amanatides P.G."/>
            <person name="Scherer S.E."/>
            <person name="Li P.W."/>
            <person name="Hoskins R.A."/>
            <person name="Galle R.F."/>
            <person name="George R.A."/>
            <person name="Lewis S.E."/>
            <person name="Richards S."/>
            <person name="Ashburner M."/>
            <person name="Henderson S.N."/>
            <person name="Sutton G.G."/>
            <person name="Wortman J.R."/>
            <person name="Yandell M.D."/>
            <person name="Zhang Q."/>
            <person name="Chen L.X."/>
            <person name="Brandon R.C."/>
            <person name="Rogers Y.-H.C."/>
            <person name="Blazej R.G."/>
            <person name="Champe M."/>
            <person name="Pfeiffer B.D."/>
            <person name="Wan K.H."/>
            <person name="Doyle C."/>
            <person name="Baxter E.G."/>
            <person name="Helt G."/>
            <person name="Nelson C.R."/>
            <person name="Miklos G.L.G."/>
            <person name="Abril J.F."/>
            <person name="Agbayani A."/>
            <person name="An H.-J."/>
            <person name="Andrews-Pfannkoch C."/>
            <person name="Baldwin D."/>
            <person name="Ballew R.M."/>
            <person name="Basu A."/>
            <person name="Baxendale J."/>
            <person name="Bayraktaroglu L."/>
            <person name="Beasley E.M."/>
            <person name="Beeson K.Y."/>
            <person name="Benos P.V."/>
            <person name="Berman B.P."/>
            <person name="Bhandari D."/>
            <person name="Bolshakov S."/>
            <person name="Borkova D."/>
            <person name="Botchan M.R."/>
            <person name="Bouck J."/>
            <person name="Brokstein P."/>
            <person name="Brottier P."/>
            <person name="Burtis K.C."/>
            <person name="Busam D.A."/>
            <person name="Butler H."/>
            <person name="Cadieu E."/>
            <person name="Center A."/>
            <person name="Chandra I."/>
            <person name="Cherry J.M."/>
            <person name="Cawley S."/>
            <person name="Dahlke C."/>
            <person name="Davenport L.B."/>
            <person name="Davies P."/>
            <person name="de Pablos B."/>
            <person name="Delcher A."/>
            <person name="Deng Z."/>
            <person name="Mays A.D."/>
            <person name="Dew I."/>
            <person name="Dietz S.M."/>
            <person name="Dodson K."/>
            <person name="Doup L.E."/>
            <person name="Downes M."/>
            <person name="Dugan-Rocha S."/>
            <person name="Dunkov B.C."/>
            <person name="Dunn P."/>
            <person name="Durbin K.J."/>
            <person name="Evangelista C.C."/>
            <person name="Ferraz C."/>
            <person name="Ferriera S."/>
            <person name="Fleischmann W."/>
            <person name="Fosler C."/>
            <person name="Gabrielian A.E."/>
            <person name="Garg N.S."/>
            <person name="Gelbart W.M."/>
            <person name="Glasser K."/>
            <person name="Glodek A."/>
            <person name="Gong F."/>
            <person name="Gorrell J.H."/>
            <person name="Gu Z."/>
            <person name="Guan P."/>
            <person name="Harris M."/>
            <person name="Harris N.L."/>
            <person name="Harvey D.A."/>
            <person name="Heiman T.J."/>
            <person name="Hernandez J.R."/>
            <person name="Houck J."/>
            <person name="Hostin D."/>
            <person name="Houston K.A."/>
            <person name="Howland T.J."/>
            <person name="Wei M.-H."/>
            <person name="Ibegwam C."/>
            <person name="Jalali M."/>
            <person name="Kalush F."/>
            <person name="Karpen G.H."/>
            <person name="Ke Z."/>
            <person name="Kennison J.A."/>
            <person name="Ketchum K.A."/>
            <person name="Kimmel B.E."/>
            <person name="Kodira C.D."/>
            <person name="Kraft C.L."/>
            <person name="Kravitz S."/>
            <person name="Kulp D."/>
            <person name="Lai Z."/>
            <person name="Lasko P."/>
            <person name="Lei Y."/>
            <person name="Levitsky A.A."/>
            <person name="Li J.H."/>
            <person name="Li Z."/>
            <person name="Liang Y."/>
            <person name="Lin X."/>
            <person name="Liu X."/>
            <person name="Mattei B."/>
            <person name="McIntosh T.C."/>
            <person name="McLeod M.P."/>
            <person name="McPherson D."/>
            <person name="Merkulov G."/>
            <person name="Milshina N.V."/>
            <person name="Mobarry C."/>
            <person name="Morris J."/>
            <person name="Moshrefi A."/>
            <person name="Mount S.M."/>
            <person name="Moy M."/>
            <person name="Murphy B."/>
            <person name="Murphy L."/>
            <person name="Muzny D.M."/>
            <person name="Nelson D.L."/>
            <person name="Nelson D.R."/>
            <person name="Nelson K.A."/>
            <person name="Nixon K."/>
            <person name="Nusskern D.R."/>
            <person name="Pacleb J.M."/>
            <person name="Palazzolo M."/>
            <person name="Pittman G.S."/>
            <person name="Pan S."/>
            <person name="Pollard J."/>
            <person name="Puri V."/>
            <person name="Reese M.G."/>
            <person name="Reinert K."/>
            <person name="Remington K."/>
            <person name="Saunders R.D.C."/>
            <person name="Scheeler F."/>
            <person name="Shen H."/>
            <person name="Shue B.C."/>
            <person name="Siden-Kiamos I."/>
            <person name="Simpson M."/>
            <person name="Skupski M.P."/>
            <person name="Smith T.J."/>
            <person name="Spier E."/>
            <person name="Spradling A.C."/>
            <person name="Stapleton M."/>
            <person name="Strong R."/>
            <person name="Sun E."/>
            <person name="Svirskas R."/>
            <person name="Tector C."/>
            <person name="Turner R."/>
            <person name="Venter E."/>
            <person name="Wang A.H."/>
            <person name="Wang X."/>
            <person name="Wang Z.-Y."/>
            <person name="Wassarman D.A."/>
            <person name="Weinstock G.M."/>
            <person name="Weissenbach J."/>
            <person name="Williams S.M."/>
            <person name="Woodage T."/>
            <person name="Worley K.C."/>
            <person name="Wu D."/>
            <person name="Yang S."/>
            <person name="Yao Q.A."/>
            <person name="Ye J."/>
            <person name="Yeh R.-F."/>
            <person name="Zaveri J.S."/>
            <person name="Zhan M."/>
            <person name="Zhang G."/>
            <person name="Zhao Q."/>
            <person name="Zheng L."/>
            <person name="Zheng X.H."/>
            <person name="Zhong F.N."/>
            <person name="Zhong W."/>
            <person name="Zhou X."/>
            <person name="Zhu S.C."/>
            <person name="Zhu X."/>
            <person name="Smith H.O."/>
            <person name="Gibbs R.A."/>
            <person name="Myers E.W."/>
            <person name="Rubin G.M."/>
            <person name="Venter J.C."/>
        </authorList>
    </citation>
    <scope>NUCLEOTIDE SEQUENCE [LARGE SCALE GENOMIC DNA]</scope>
    <source>
        <strain evidence="10">Berkeley</strain>
    </source>
</reference>
<reference evidence="10" key="2">
    <citation type="journal article" date="2002" name="Genome Biol.">
        <title>Finishing a whole-genome shotgun: release 3 of the Drosophila melanogaster euchromatic genome sequence.</title>
        <authorList>
            <person name="Celniker S.E."/>
            <person name="Wheeler D.A."/>
            <person name="Kronmiller B."/>
            <person name="Carlson J.W."/>
            <person name="Halpern A."/>
            <person name="Patel S."/>
            <person name="Adams M."/>
            <person name="Champe M."/>
            <person name="Dugan S.P."/>
            <person name="Frise E."/>
            <person name="Hodgson A."/>
            <person name="George R.A."/>
            <person name="Hoskins R.A."/>
            <person name="Laverty T."/>
            <person name="Muzny D.M."/>
            <person name="Nelson C.R."/>
            <person name="Pacleb J.M."/>
            <person name="Park S."/>
            <person name="Pfeiffer B.D."/>
            <person name="Richards S."/>
            <person name="Sodergren E.J."/>
            <person name="Svirskas R."/>
            <person name="Tabor P.E."/>
            <person name="Wan K."/>
            <person name="Stapleton M."/>
            <person name="Sutton G.G."/>
            <person name="Venter C."/>
            <person name="Weinstock G."/>
            <person name="Scherer S.E."/>
            <person name="Myers E.W."/>
            <person name="Gibbs R.A."/>
            <person name="Rubin G.M."/>
        </authorList>
    </citation>
    <scope>NUCLEOTIDE SEQUENCE [LARGE SCALE GENOMIC DNA]</scope>
    <source>
        <strain evidence="10">Berkeley</strain>
    </source>
</reference>
<reference evidence="10" key="3">
    <citation type="journal article" date="2002" name="Genome Biol.">
        <title>Annotation of the Drosophila melanogaster euchromatic genome: a systematic review.</title>
        <authorList>
            <person name="Misra S."/>
            <person name="Crosby M.A."/>
            <person name="Mungall C.J."/>
            <person name="Matthews B.B."/>
            <person name="Campbell K.S."/>
            <person name="Hradecky P."/>
            <person name="Huang Y."/>
            <person name="Kaminker J.S."/>
            <person name="Millburn G.H."/>
            <person name="Prochnik S.E."/>
            <person name="Smith C.D."/>
            <person name="Tupy J.L."/>
            <person name="Whitfield E.J."/>
            <person name="Bayraktaroglu L."/>
            <person name="Berman B.P."/>
            <person name="Bettencourt B.R."/>
            <person name="Celniker S.E."/>
            <person name="de Grey A.D.N.J."/>
            <person name="Drysdale R.A."/>
            <person name="Harris N.L."/>
            <person name="Richter J."/>
            <person name="Russo S."/>
            <person name="Schroeder A.J."/>
            <person name="Shu S.Q."/>
            <person name="Stapleton M."/>
            <person name="Yamada C."/>
            <person name="Ashburner M."/>
            <person name="Gelbart W.M."/>
            <person name="Rubin G.M."/>
            <person name="Lewis S.E."/>
        </authorList>
    </citation>
    <scope>GENOME REANNOTATION</scope>
    <source>
        <strain evidence="10">Berkeley</strain>
    </source>
</reference>
<reference evidence="10" key="4">
    <citation type="journal article" date="2002" name="Genome Biol.">
        <title>The transposable elements of the Drosophila melanogaster euchromatin: a genomics perspective.</title>
        <authorList>
            <person name="Kaminker J.S."/>
            <person name="Bergman C.M."/>
            <person name="Kronmiller B."/>
            <person name="Carlson J.W."/>
            <person name="Svirskas R."/>
            <person name="Patel S."/>
            <person name="Frise E."/>
            <person name="Wheeler D.A."/>
            <person name="Lewis S.E."/>
            <person name="Rubin G.M."/>
            <person name="Ashburner M."/>
            <person name="Celniker S.E."/>
        </authorList>
    </citation>
    <scope>NUCLEOTIDE SEQUENCE [LARGE SCALE GENOMIC DNA]</scope>
    <source>
        <strain evidence="10">Berkeley</strain>
    </source>
</reference>
<reference evidence="10" key="5">
    <citation type="journal article" date="2002" name="Genome Biol.">
        <title>A Drosophila full-length cDNA resource.</title>
        <authorList>
            <person name="Stapleton M."/>
            <person name="Carlson J.W."/>
            <person name="Brokstein P."/>
            <person name="Yu C."/>
            <person name="Champe M."/>
            <person name="George R.A."/>
            <person name="Guarin H."/>
            <person name="Kronmiller B."/>
            <person name="Pacleb J.M."/>
            <person name="Park S."/>
            <person name="Wan K.H."/>
            <person name="Rubin G.M."/>
            <person name="Celniker S.E."/>
        </authorList>
    </citation>
    <scope>NUCLEOTIDE SEQUENCE [LARGE SCALE MRNA]</scope>
    <source>
        <strain evidence="10">Berkeley</strain>
        <tissue evidence="10">Head</tissue>
    </source>
</reference>
<reference evidence="7" key="6">
    <citation type="journal article" date="1998" name="Biochemistry">
        <title>Functional analysis of conserved domains in the phosphotyrosyl phosphatase activator. Molecular cloning of the homologues from Drosophila melanogaster and Saccharomyces cerevisiae.</title>
        <authorList>
            <person name="Van Hoof C."/>
            <person name="Janssens V."/>
            <person name="Dinishiotu A."/>
            <person name="Merlevede W."/>
            <person name="Goris J."/>
        </authorList>
    </citation>
    <scope>FUNCTION</scope>
</reference>
<reference evidence="7" key="7">
    <citation type="journal article" date="2016" name="Development">
        <title>Phosphotyrosyl phosphatase activator facilitates localization of Miranda through dephosphorylation in dividing neuroblasts.</title>
        <authorList>
            <person name="Zhang F."/>
            <person name="Huang Z.X."/>
            <person name="Bao H."/>
            <person name="Cong F."/>
            <person name="Wang H."/>
            <person name="Chai P.C."/>
            <person name="Xi Y."/>
            <person name="Ge W."/>
            <person name="Somers W.G."/>
            <person name="Yang Y."/>
            <person name="Cai Y."/>
            <person name="Yang X."/>
        </authorList>
    </citation>
    <scope>FUNCTION</scope>
    <scope>INTERACTION WITH PP4-19C</scope>
    <scope>SUBCELLULAR LOCATION</scope>
    <scope>DEVELOPMENTAL STAGE</scope>
    <scope>MUTAGENESIS OF 126-GLN--GLU-398</scope>
</reference>
<reference evidence="7" key="8">
    <citation type="journal article" date="2023" name="Brain">
        <title>PTPA variants and impaired PP2A activity in early-onset parkinsonism with intellectual disability.</title>
        <authorList>
            <consortium name="French and Mediterranean Parkinson disease Genetics Study Group"/>
            <consortium name="International Parkinsonism Genetics Network"/>
            <person name="Fevga C."/>
            <person name="Tesson C."/>
            <person name="Carreras Mascaro A."/>
            <person name="Courtin T."/>
            <person name="van Coller R."/>
            <person name="Sakka S."/>
            <person name="Ferraro F."/>
            <person name="Farhat N."/>
            <person name="Bardien S."/>
            <person name="Damak M."/>
            <person name="Carr J."/>
            <person name="Ferrien M."/>
            <person name="Boumeester V."/>
            <person name="Hundscheid J."/>
            <person name="Grillenzoni N."/>
            <person name="Kessissoglou I.A."/>
            <person name="Kuipers D.J.S."/>
            <person name="Quadri M."/>
            <person name="Corvol J.C."/>
            <person name="Mhiri C."/>
            <person name="Hassan B.A."/>
            <person name="Breedveld G.J."/>
            <person name="Lesage S."/>
            <person name="Mandemakers W."/>
            <person name="Brice A."/>
            <person name="Bonifati V."/>
        </authorList>
    </citation>
    <scope>DISRUPTION PHENOTYPE</scope>
</reference>
<accession>Q9VQQ0</accession>
<name>PTPA_DROME</name>
<comment type="function">
    <text evidence="2 4 6">PPIases accelerate the folding of proteins. It catalyzes the cis-trans isomerization of proline imidic peptide bonds in oligopeptides (By similarity). Acts as a regulatory subunit for serine/threonine-protein phosphatase 2A (PP2A) (PubMed:9737869). Modulates PP2A activity or substrate specificity, probably by inducing a conformational change in the catalytic subunit, a proposed direct target of the PPIase (PubMed:9737869). Acts as mediator for the basal localization of the Miranda (Mira) complex during mitosis of larval neuroblast asymmetric division (PubMed:26586222). Associates with the phosphatase 4 (PP4) complex to mediate basal localization of Mira; probably by facilitating the dephosphorylation of Mira (PubMed:26586222). Cortical association of Mira mediated by the PTPA-PP4 complex seems to be independent of aPKC activity (PubMed:26586222).</text>
</comment>
<comment type="catalytic activity">
    <reaction evidence="2">
        <text>[protein]-peptidylproline (omega=180) = [protein]-peptidylproline (omega=0)</text>
        <dbReference type="Rhea" id="RHEA:16237"/>
        <dbReference type="Rhea" id="RHEA-COMP:10747"/>
        <dbReference type="Rhea" id="RHEA-COMP:10748"/>
        <dbReference type="ChEBI" id="CHEBI:83833"/>
        <dbReference type="ChEBI" id="CHEBI:83834"/>
        <dbReference type="EC" id="5.2.1.8"/>
    </reaction>
</comment>
<comment type="subunit">
    <text evidence="1 4">Associates with PP2A heterodimeric core enzyme PP2A(D), composed of a catalytic subunit (subunit C) and a constant regulatory subunit (PR65 or subunit A) (By similarity). Interacts with the catalytic subunit Pp4-19C of the serine/threonine-protein phosphatase 4 (PP4) complex; thereby mediating basal localization of the Miranda (Mira) complex; probably by facilitating the dephosphorylation of Mira (PubMed:26586222).</text>
</comment>
<comment type="subcellular location">
    <subcellularLocation>
        <location evidence="2 4">Cytoplasm</location>
    </subcellularLocation>
    <subcellularLocation>
        <location evidence="4">Nucleus</location>
    </subcellularLocation>
    <text evidence="4">Enriched in nuclei during interphase and dispersed evenly throughout the cytoplasm after breakdown of the nuclear envelope in mitosis.</text>
</comment>
<comment type="developmental stage">
    <text evidence="4">Expressed in brain of L3 larvae, including all neuroblasts (at protein level).</text>
</comment>
<comment type="disruption phenotype">
    <text evidence="5">RNAi-mediated knockdown in neurons leads to impairment of locomotion.</text>
</comment>
<comment type="similarity">
    <text evidence="2">Belongs to the PTPA-type PPIase family.</text>
</comment>
<protein>
    <recommendedName>
        <fullName evidence="2">Serine/threonine-protein phosphatase 2A activator</fullName>
        <ecNumber evidence="2">5.2.1.8</ecNumber>
    </recommendedName>
    <alternativeName>
        <fullName evidence="2">Phosphotyrosyl phosphatase activator</fullName>
        <shortName evidence="7">PTPA</shortName>
    </alternativeName>
</protein>
<feature type="chain" id="PRO_0000460467" description="Serine/threonine-protein phosphatase 2A activator">
    <location>
        <begin position="1"/>
        <end position="398"/>
    </location>
</feature>
<feature type="region of interest" description="Disordered" evidence="3">
    <location>
        <begin position="343"/>
        <end position="398"/>
    </location>
</feature>
<feature type="compositionally biased region" description="Pro residues" evidence="3">
    <location>
        <begin position="343"/>
        <end position="352"/>
    </location>
</feature>
<feature type="compositionally biased region" description="Low complexity" evidence="3">
    <location>
        <begin position="363"/>
        <end position="388"/>
    </location>
</feature>
<feature type="binding site" evidence="1">
    <location>
        <position position="137"/>
    </location>
    <ligand>
        <name>ATP</name>
        <dbReference type="ChEBI" id="CHEBI:30616"/>
    </ligand>
</feature>
<feature type="binding site" evidence="1">
    <location>
        <position position="142"/>
    </location>
    <ligand>
        <name>ATP</name>
        <dbReference type="ChEBI" id="CHEBI:30616"/>
    </ligand>
</feature>
<feature type="binding site" evidence="1">
    <location>
        <position position="143"/>
    </location>
    <ligand>
        <name>ATP</name>
        <dbReference type="ChEBI" id="CHEBI:30616"/>
    </ligand>
</feature>
<feature type="binding site" evidence="1">
    <location>
        <position position="197"/>
    </location>
    <ligand>
        <name>Mg(2+)</name>
        <dbReference type="ChEBI" id="CHEBI:18420"/>
    </ligand>
</feature>
<feature type="binding site" evidence="1">
    <location>
        <position position="203"/>
    </location>
    <ligand>
        <name>Mg(2+)</name>
        <dbReference type="ChEBI" id="CHEBI:18420"/>
    </ligand>
</feature>
<feature type="binding site" evidence="1">
    <location>
        <position position="293"/>
    </location>
    <ligand>
        <name>ATP</name>
        <dbReference type="ChEBI" id="CHEBI:30616"/>
    </ligand>
</feature>
<feature type="binding site" evidence="1">
    <location>
        <position position="296"/>
    </location>
    <ligand>
        <name>ATP</name>
        <dbReference type="ChEBI" id="CHEBI:30616"/>
    </ligand>
</feature>
<feature type="binding site" evidence="1">
    <location>
        <position position="297"/>
    </location>
    <ligand>
        <name>ATP</name>
        <dbReference type="ChEBI" id="CHEBI:30616"/>
    </ligand>
</feature>
<feature type="mutagenesis site" description="Delayed basal localization of the Miranda (Mira) complex during mitosis of larval neuroblasts." evidence="4">
    <location>
        <begin position="126"/>
        <end position="398"/>
    </location>
</feature>
<dbReference type="EC" id="5.2.1.8" evidence="2"/>
<dbReference type="EMBL" id="AE014134">
    <property type="protein sequence ID" value="AAF51115.1"/>
    <property type="molecule type" value="Genomic_DNA"/>
</dbReference>
<dbReference type="EMBL" id="AY060614">
    <property type="protein sequence ID" value="AAL28162.1"/>
    <property type="molecule type" value="mRNA"/>
</dbReference>
<dbReference type="RefSeq" id="NP_523466.2">
    <property type="nucleotide sequence ID" value="NM_078742.3"/>
</dbReference>
<dbReference type="SMR" id="Q9VQQ0"/>
<dbReference type="FunCoup" id="Q9VQQ0">
    <property type="interactions" value="1670"/>
</dbReference>
<dbReference type="STRING" id="7227.FBpp0077277"/>
<dbReference type="PaxDb" id="7227-FBpp0077277"/>
<dbReference type="DNASU" id="33555"/>
<dbReference type="EnsemblMetazoa" id="FBtr0077589">
    <property type="protein sequence ID" value="FBpp0077277"/>
    <property type="gene ID" value="FBgn0016698"/>
</dbReference>
<dbReference type="GeneID" id="33555"/>
<dbReference type="KEGG" id="dme:Dmel_CG3289"/>
<dbReference type="UCSC" id="CG3289-RA">
    <property type="organism name" value="d. melanogaster"/>
</dbReference>
<dbReference type="AGR" id="FB:FBgn0016698"/>
<dbReference type="CTD" id="5524"/>
<dbReference type="FlyBase" id="FBgn0016698">
    <property type="gene designation" value="Ptpa"/>
</dbReference>
<dbReference type="VEuPathDB" id="VectorBase:FBgn0016698"/>
<dbReference type="eggNOG" id="KOG2867">
    <property type="taxonomic scope" value="Eukaryota"/>
</dbReference>
<dbReference type="GeneTree" id="ENSGT00390000011500"/>
<dbReference type="HOGENOM" id="CLU_030733_5_1_1"/>
<dbReference type="InParanoid" id="Q9VQQ0"/>
<dbReference type="OMA" id="SWIKINA"/>
<dbReference type="OrthoDB" id="16120at2759"/>
<dbReference type="BioGRID-ORCS" id="33555">
    <property type="hits" value="0 hits in 1 CRISPR screen"/>
</dbReference>
<dbReference type="GenomeRNAi" id="33555"/>
<dbReference type="Proteomes" id="UP000000803">
    <property type="component" value="Chromosome 2L"/>
</dbReference>
<dbReference type="Bgee" id="FBgn0016698">
    <property type="expression patterns" value="Expressed in adult middle midgut class II enteroendocrine cell in adult midgut (Drosophila) and 97 other cell types or tissues"/>
</dbReference>
<dbReference type="ExpressionAtlas" id="Q9VQQ0">
    <property type="expression patterns" value="baseline and differential"/>
</dbReference>
<dbReference type="GO" id="GO:0005737">
    <property type="term" value="C:cytoplasm"/>
    <property type="evidence" value="ECO:0000318"/>
    <property type="project" value="GO_Central"/>
</dbReference>
<dbReference type="GO" id="GO:0005634">
    <property type="term" value="C:nucleus"/>
    <property type="evidence" value="ECO:0000314"/>
    <property type="project" value="FlyBase"/>
</dbReference>
<dbReference type="GO" id="GO:0000159">
    <property type="term" value="C:protein phosphatase type 2A complex"/>
    <property type="evidence" value="ECO:0000318"/>
    <property type="project" value="GO_Central"/>
</dbReference>
<dbReference type="GO" id="GO:0005524">
    <property type="term" value="F:ATP binding"/>
    <property type="evidence" value="ECO:0007669"/>
    <property type="project" value="UniProtKB-KW"/>
</dbReference>
<dbReference type="GO" id="GO:0046872">
    <property type="term" value="F:metal ion binding"/>
    <property type="evidence" value="ECO:0007669"/>
    <property type="project" value="UniProtKB-KW"/>
</dbReference>
<dbReference type="GO" id="GO:0003755">
    <property type="term" value="F:peptidyl-prolyl cis-trans isomerase activity"/>
    <property type="evidence" value="ECO:0000318"/>
    <property type="project" value="GO_Central"/>
</dbReference>
<dbReference type="GO" id="GO:0008160">
    <property type="term" value="F:protein tyrosine phosphatase activator activity"/>
    <property type="evidence" value="ECO:0000318"/>
    <property type="project" value="GO_Central"/>
</dbReference>
<dbReference type="GO" id="GO:0045175">
    <property type="term" value="P:basal protein localization"/>
    <property type="evidence" value="ECO:0000315"/>
    <property type="project" value="FlyBase"/>
</dbReference>
<dbReference type="GO" id="GO:0007052">
    <property type="term" value="P:mitotic spindle organization"/>
    <property type="evidence" value="ECO:0000318"/>
    <property type="project" value="GO_Central"/>
</dbReference>
<dbReference type="GO" id="GO:1904785">
    <property type="term" value="P:regulation of asymmetric protein localization involved in cell fate determination"/>
    <property type="evidence" value="ECO:0000315"/>
    <property type="project" value="FlyBase"/>
</dbReference>
<dbReference type="CDD" id="cd04087">
    <property type="entry name" value="PTPA"/>
    <property type="match status" value="1"/>
</dbReference>
<dbReference type="FunFam" id="1.20.120.1150:FF:000002">
    <property type="entry name" value="Serine/threonine-protein phosphatase 2A activator"/>
    <property type="match status" value="1"/>
</dbReference>
<dbReference type="Gene3D" id="1.20.120.1150">
    <property type="match status" value="1"/>
</dbReference>
<dbReference type="InterPro" id="IPR004327">
    <property type="entry name" value="Phstyr_phstse_ac"/>
</dbReference>
<dbReference type="InterPro" id="IPR043170">
    <property type="entry name" value="PTPA_C_lid"/>
</dbReference>
<dbReference type="InterPro" id="IPR037218">
    <property type="entry name" value="PTPA_sf"/>
</dbReference>
<dbReference type="PANTHER" id="PTHR10012">
    <property type="entry name" value="SERINE/THREONINE-PROTEIN PHOSPHATASE 2A REGULATORY SUBUNIT B"/>
    <property type="match status" value="1"/>
</dbReference>
<dbReference type="PANTHER" id="PTHR10012:SF0">
    <property type="entry name" value="SERINE_THREONINE-PROTEIN PHOSPHATASE 2A ACTIVATOR"/>
    <property type="match status" value="1"/>
</dbReference>
<dbReference type="Pfam" id="PF03095">
    <property type="entry name" value="PTPA"/>
    <property type="match status" value="1"/>
</dbReference>
<dbReference type="SUPFAM" id="SSF140984">
    <property type="entry name" value="PTPA-like"/>
    <property type="match status" value="1"/>
</dbReference>
<proteinExistence type="evidence at protein level"/>
<gene>
    <name evidence="9" type="primary">Ptpa</name>
    <name evidence="8" type="synonym">DPTPA</name>
    <name evidence="8 9" type="ORF">CG3289</name>
</gene>
<evidence type="ECO:0000250" key="1">
    <source>
        <dbReference type="UniProtKB" id="Q15257"/>
    </source>
</evidence>
<evidence type="ECO:0000255" key="2">
    <source>
        <dbReference type="RuleBase" id="RU361210"/>
    </source>
</evidence>
<evidence type="ECO:0000256" key="3">
    <source>
        <dbReference type="SAM" id="MobiDB-lite"/>
    </source>
</evidence>
<evidence type="ECO:0000269" key="4">
    <source>
    </source>
</evidence>
<evidence type="ECO:0000269" key="5">
    <source>
    </source>
</evidence>
<evidence type="ECO:0000269" key="6">
    <source>
    </source>
</evidence>
<evidence type="ECO:0000305" key="7"/>
<evidence type="ECO:0000312" key="8">
    <source>
        <dbReference type="EMBL" id="AAF51115.1"/>
    </source>
</evidence>
<evidence type="ECO:0000312" key="9">
    <source>
        <dbReference type="FlyBase" id="FBgn0016698"/>
    </source>
</evidence>
<evidence type="ECO:0000312" key="10">
    <source>
        <dbReference type="Proteomes" id="UP000000803"/>
    </source>
</evidence>